<name>INLPA_STRC4</name>
<accession>P0DX16</accession>
<reference key="1">
    <citation type="journal article" date="2017" name="Proc. Natl. Acad. Sci. U.S.A.">
        <title>Biosynthesis of isonitrile lipopeptides by conserved nonribosomal peptide synthetase gene clusters in Actinobacteria.</title>
        <authorList>
            <person name="Harris N.C."/>
            <person name="Sato M."/>
            <person name="Herman N.A."/>
            <person name="Twigg F."/>
            <person name="Cai W."/>
            <person name="Liu J."/>
            <person name="Zhu X."/>
            <person name="Downey J."/>
            <person name="Khalaf R."/>
            <person name="Martin J."/>
            <person name="Koshino H."/>
            <person name="Zhang W."/>
        </authorList>
    </citation>
    <scope>NUCLEOTIDE SEQUENCE [GENOMIC DNA]</scope>
    <scope>FUNCTION</scope>
    <scope>CATALYTIC ACTIVITY</scope>
    <scope>DOMAIN</scope>
    <source>
        <strain>NRRL 18370</strain>
    </source>
</reference>
<reference key="2">
    <citation type="journal article" date="2018" name="Angew. Chem. Int. Ed. Engl.">
        <title>Isonitrile Formation by a Non-Heme Iron(II)-Dependent Oxidase/Decarboxylase.</title>
        <authorList>
            <person name="Harris N.C."/>
            <person name="Born D.A."/>
            <person name="Cai W."/>
            <person name="Huang Y."/>
            <person name="Martin J."/>
            <person name="Khalaf R."/>
            <person name="Drennan C.L."/>
            <person name="Zhang W."/>
        </authorList>
    </citation>
    <scope>FUNCTION</scope>
    <scope>CATALYTIC ACTIVITY</scope>
    <source>
        <strain>NRRL 18370</strain>
    </source>
</reference>
<comment type="function">
    <text evidence="3 4">Nonribosomal peptide synthetase (NRPS) involved in the biosynthesis of a unique class of isonitrile lipopeptides (INLPs). Catalyzes the final step in the pathway, i.e. the condensation of a (3R)-3-isocyanyl-fatty acyl-[ACP] to both amino groups of a lysine, producing isonitrile lipopeptides. Can use (3R)-3-isocyanylbutanoyl-[ACP] as substrate, leading to (2S)-2,6-bis[(3R)-3-isocyanobutanamido]hexan-1-ol.</text>
</comment>
<comment type="catalytic activity">
    <reaction evidence="3 4">
        <text>2 a (3R)-3-isocyanyl-fatty acyl-[ACP] + L-lysine + ATP + 2 NADPH = an isonitrile lipopeptide + 2 holo-[ACP] + AMP + diphosphate + 2 NADP(+)</text>
        <dbReference type="Rhea" id="RHEA:75551"/>
        <dbReference type="Rhea" id="RHEA-COMP:9685"/>
        <dbReference type="Rhea" id="RHEA-COMP:18454"/>
        <dbReference type="ChEBI" id="CHEBI:30616"/>
        <dbReference type="ChEBI" id="CHEBI:32551"/>
        <dbReference type="ChEBI" id="CHEBI:33019"/>
        <dbReference type="ChEBI" id="CHEBI:57783"/>
        <dbReference type="ChEBI" id="CHEBI:58349"/>
        <dbReference type="ChEBI" id="CHEBI:64479"/>
        <dbReference type="ChEBI" id="CHEBI:194105"/>
        <dbReference type="ChEBI" id="CHEBI:194107"/>
        <dbReference type="ChEBI" id="CHEBI:456215"/>
    </reaction>
    <physiologicalReaction direction="left-to-right" evidence="3 4">
        <dbReference type="Rhea" id="RHEA:75552"/>
    </physiologicalReaction>
</comment>
<comment type="catalytic activity">
    <reaction evidence="3 4">
        <text>2 (3R)-3-isocyanylbutanoyl-[ACP] + L-lysine + ATP + 2 NADPH = (2S)-2,6-bis[(3R)-3-isocyanobutanamido]hexan-1-ol + 2 holo-[ACP] + AMP + diphosphate + 2 NADP(+)</text>
        <dbReference type="Rhea" id="RHEA:75547"/>
        <dbReference type="Rhea" id="RHEA-COMP:9685"/>
        <dbReference type="Rhea" id="RHEA-COMP:18456"/>
        <dbReference type="ChEBI" id="CHEBI:30616"/>
        <dbReference type="ChEBI" id="CHEBI:32551"/>
        <dbReference type="ChEBI" id="CHEBI:33019"/>
        <dbReference type="ChEBI" id="CHEBI:57783"/>
        <dbReference type="ChEBI" id="CHEBI:58349"/>
        <dbReference type="ChEBI" id="CHEBI:64479"/>
        <dbReference type="ChEBI" id="CHEBI:194102"/>
        <dbReference type="ChEBI" id="CHEBI:194108"/>
        <dbReference type="ChEBI" id="CHEBI:456215"/>
    </reaction>
    <physiologicalReaction direction="left-to-right" evidence="3 4">
        <dbReference type="Rhea" id="RHEA:75548"/>
    </physiologicalReaction>
</comment>
<comment type="cofactor">
    <cofactor evidence="1">
        <name>pantetheine 4'-phosphate</name>
        <dbReference type="ChEBI" id="CHEBI:47942"/>
    </cofactor>
</comment>
<comment type="domain">
    <text evidence="7">Contains 4 domains: a C (condensation) domain, an A (adenylation) domain, a T (thiolation) domain, and an R (reduction) domain. The T domain acts as a lyine-specific peptidyl-carrier protein, and carries a lyine residue that is transferred to it by the A domain. The C domain catalyzes the condensation of two isonitrile-containing moieties to both amino groups of the lysine bound to the T domain, a rare activity in nonribosomal peptide biosynthesis. Finally, the R domain catalyzes a four-electron thioester reduction, releasing the product from the NRPS and forming a terminal alcohol product.</text>
</comment>
<comment type="similarity">
    <text evidence="6">Belongs to the ATP-dependent AMP-binding enzyme family.</text>
</comment>
<sequence>MSPHDDAINGTGDMTDRRPLLAAQEGIWTGQQLDPDSPAYNTAEYVHIDGPVDSAVFDTALHHVVAETKALNVAFVVDEQGQPWETDAPAGDWHLHTADLTAEPDPHAAALAWMDRDMARPVDLARRPVFGHALLRIAPEQYLWYHRVHHIALDGFGLSLVARRVAEVYTALTVGEPVADSGFGTLASVRDEERVYRESARFAKDRDYWADRFADRPPVATPAGRTALPARTFHRRVVDLGAVQTETLRAVARDLEVTWSEVLLAVTAARLHHATGASEIVLSLPVMGRLGSVSLRVPCMVRNILPLRVTVTASDSLRELAARISRELRSGLPHQRYRYEQLRRDLRLVGGQRRLSGPGVNIMPFEYDLRFAGHPSTVHNVSAGPVDDLSVNVYDRAEGAGLRIAVDANPDLYDEADVTALQEGLLSLLGQAVAAPDRALGELRTREAVPVLDGGPLPGPVRPVLGLIADHAAQRGGSVAVEHDGRSITYAQLFGSARDLARRLAARQVGRGDVVAVAVPRGIDAITAILGVLLSGAAYCPLDPTAPRARKAELLDDARPALVLTASAHAADFGDRAVVRLDQPEPESQEAARPTAPAPTAPAPEDLAYVIHTSGSTGRPKGVEIGHRALAHFVAGATHRYGLHHGDRVVQFAALHFDTSVEEVFLTLCAGATLVVRTDDMTDSVPGFLDACARLRISFLDLPTAYWHELAYAISTGAAALPAEVRTVVIGGEAALPERVDRWRKAVGTSVRLLNTYGPTEATVVATVADLHDPSLAPGDVPIGLPLPGTRAAVVDGELHLLGDNLAVGYRGDRPPDAARFAPLDAVHEAPRAYRTGDLVRIGDDGQLRYLGRSDTEFKISGHRVHPAEVESALLAHPGVRDAAVVGQLLHDGTRRLVAHVVPDGPAPAVALIRDHLRAALPAAMVPSAVEFLDRLPRTSAGKIDRNALAAMAPDVHVPDPDAQVPDPGAETAAHDSTLERTIAAVWQQVLAVAAVSARDDVFDLGAQSLQVIQVANRLSVELRRDVKVAWLFQHPTPAELARFLKQQEQQAHAQVQPRPAGPGLPPTLLADAVLDPDIRPGGGHPRAAGTPDRVLLTGATGFVGVHLLAELLTSTDAEVVCTVRAPSPAAAAARIHQTLEIHQIHLSDVARKRITAVPADLARPRLGLDEALFAELTRTCGAIVHNGATVSIMREYATLRAANTESTRDLLRMAAVRSTPLHFVSTLSVAPPIGLAPEVPEAFLPPHTGLRYGYQQSKWAAERLLEQAAERGLPVTVHRLGRIVGPHATGYVNERDFLWSVLRAGVPAGIVPDLFEEETWTPVDHIAQALVHLSLGQRPPTATVFNHATTPVRLSDVYDWLEEYGYPLRRMPLAQWRAELRGSSGAFGAVATTLAFFDSWDADTDEATGPELRLGRVRADNVVTGLHGSGITCPSVDRDLVFRYLDHCVTTGTLPAPAGKQGHPAMPAK</sequence>
<organism>
    <name type="scientific">Streptomyces coeruleorubidus</name>
    <dbReference type="NCBI Taxonomy" id="116188"/>
    <lineage>
        <taxon>Bacteria</taxon>
        <taxon>Bacillati</taxon>
        <taxon>Actinomycetota</taxon>
        <taxon>Actinomycetes</taxon>
        <taxon>Kitasatosporales</taxon>
        <taxon>Streptomycetaceae</taxon>
        <taxon>Streptomyces</taxon>
    </lineage>
</organism>
<gene>
    <name evidence="5" type="primary">scoA</name>
</gene>
<protein>
    <recommendedName>
        <fullName evidence="7 8">Isonitrile lipopeptide synthase</fullName>
        <ecNumber evidence="3 4">2.3.1.-</ecNumber>
        <ecNumber evidence="3 4">6.2.1.-</ecNumber>
    </recommendedName>
</protein>
<dbReference type="EC" id="2.3.1.-" evidence="3 4"/>
<dbReference type="EC" id="6.2.1.-" evidence="3 4"/>
<dbReference type="EMBL" id="OL448871">
    <property type="protein sequence ID" value="UYZ56980.1"/>
    <property type="molecule type" value="Genomic_DNA"/>
</dbReference>
<dbReference type="SMR" id="P0DX16"/>
<dbReference type="GO" id="GO:0005524">
    <property type="term" value="F:ATP binding"/>
    <property type="evidence" value="ECO:0007669"/>
    <property type="project" value="UniProtKB-KW"/>
</dbReference>
<dbReference type="GO" id="GO:0016874">
    <property type="term" value="F:ligase activity"/>
    <property type="evidence" value="ECO:0007669"/>
    <property type="project" value="UniProtKB-KW"/>
</dbReference>
<dbReference type="GO" id="GO:0031177">
    <property type="term" value="F:phosphopantetheine binding"/>
    <property type="evidence" value="ECO:0007669"/>
    <property type="project" value="InterPro"/>
</dbReference>
<dbReference type="GO" id="GO:0016740">
    <property type="term" value="F:transferase activity"/>
    <property type="evidence" value="ECO:0007669"/>
    <property type="project" value="UniProtKB-KW"/>
</dbReference>
<dbReference type="GO" id="GO:0017000">
    <property type="term" value="P:antibiotic biosynthetic process"/>
    <property type="evidence" value="ECO:0007669"/>
    <property type="project" value="UniProtKB-ARBA"/>
</dbReference>
<dbReference type="GO" id="GO:0008610">
    <property type="term" value="P:lipid biosynthetic process"/>
    <property type="evidence" value="ECO:0007669"/>
    <property type="project" value="UniProtKB-ARBA"/>
</dbReference>
<dbReference type="GO" id="GO:0044550">
    <property type="term" value="P:secondary metabolite biosynthetic process"/>
    <property type="evidence" value="ECO:0007669"/>
    <property type="project" value="UniProtKB-ARBA"/>
</dbReference>
<dbReference type="CDD" id="cd05930">
    <property type="entry name" value="A_NRPS"/>
    <property type="match status" value="1"/>
</dbReference>
<dbReference type="CDD" id="cd05235">
    <property type="entry name" value="SDR_e1"/>
    <property type="match status" value="1"/>
</dbReference>
<dbReference type="FunFam" id="3.40.50.980:FF:000001">
    <property type="entry name" value="Non-ribosomal peptide synthetase"/>
    <property type="match status" value="1"/>
</dbReference>
<dbReference type="Gene3D" id="3.30.300.30">
    <property type="match status" value="1"/>
</dbReference>
<dbReference type="Gene3D" id="1.10.1200.10">
    <property type="entry name" value="ACP-like"/>
    <property type="match status" value="1"/>
</dbReference>
<dbReference type="Gene3D" id="3.30.559.10">
    <property type="entry name" value="Chloramphenicol acetyltransferase-like domain"/>
    <property type="match status" value="1"/>
</dbReference>
<dbReference type="Gene3D" id="3.40.50.12780">
    <property type="entry name" value="N-terminal domain of ligase-like"/>
    <property type="match status" value="1"/>
</dbReference>
<dbReference type="Gene3D" id="3.40.50.720">
    <property type="entry name" value="NAD(P)-binding Rossmann-like Domain"/>
    <property type="match status" value="1"/>
</dbReference>
<dbReference type="Gene3D" id="3.30.559.30">
    <property type="entry name" value="Nonribosomal peptide synthetase, condensation domain"/>
    <property type="match status" value="1"/>
</dbReference>
<dbReference type="InterPro" id="IPR010071">
    <property type="entry name" value="AA_adenyl_dom"/>
</dbReference>
<dbReference type="InterPro" id="IPR036736">
    <property type="entry name" value="ACP-like_sf"/>
</dbReference>
<dbReference type="InterPro" id="IPR025110">
    <property type="entry name" value="AMP-bd_C"/>
</dbReference>
<dbReference type="InterPro" id="IPR045851">
    <property type="entry name" value="AMP-bd_C_sf"/>
</dbReference>
<dbReference type="InterPro" id="IPR020845">
    <property type="entry name" value="AMP-binding_CS"/>
</dbReference>
<dbReference type="InterPro" id="IPR000873">
    <property type="entry name" value="AMP-dep_synth/lig_dom"/>
</dbReference>
<dbReference type="InterPro" id="IPR042099">
    <property type="entry name" value="ANL_N_sf"/>
</dbReference>
<dbReference type="InterPro" id="IPR023213">
    <property type="entry name" value="CAT-like_dom_sf"/>
</dbReference>
<dbReference type="InterPro" id="IPR001242">
    <property type="entry name" value="Condensatn"/>
</dbReference>
<dbReference type="InterPro" id="IPR013120">
    <property type="entry name" value="Far_NAD-bd"/>
</dbReference>
<dbReference type="InterPro" id="IPR036291">
    <property type="entry name" value="NAD(P)-bd_dom_sf"/>
</dbReference>
<dbReference type="InterPro" id="IPR020806">
    <property type="entry name" value="PKS_PP-bd"/>
</dbReference>
<dbReference type="InterPro" id="IPR009081">
    <property type="entry name" value="PP-bd_ACP"/>
</dbReference>
<dbReference type="InterPro" id="IPR010080">
    <property type="entry name" value="Thioester_reductase-like_dom"/>
</dbReference>
<dbReference type="NCBIfam" id="TIGR01733">
    <property type="entry name" value="AA-adenyl-dom"/>
    <property type="match status" value="1"/>
</dbReference>
<dbReference type="NCBIfam" id="TIGR01746">
    <property type="entry name" value="Thioester-redct"/>
    <property type="match status" value="1"/>
</dbReference>
<dbReference type="PANTHER" id="PTHR44845:SF6">
    <property type="entry name" value="BETA-ALANINE-ACTIVATING ENZYME"/>
    <property type="match status" value="1"/>
</dbReference>
<dbReference type="PANTHER" id="PTHR44845">
    <property type="entry name" value="CARRIER DOMAIN-CONTAINING PROTEIN"/>
    <property type="match status" value="1"/>
</dbReference>
<dbReference type="Pfam" id="PF00501">
    <property type="entry name" value="AMP-binding"/>
    <property type="match status" value="1"/>
</dbReference>
<dbReference type="Pfam" id="PF13193">
    <property type="entry name" value="AMP-binding_C"/>
    <property type="match status" value="1"/>
</dbReference>
<dbReference type="Pfam" id="PF00668">
    <property type="entry name" value="Condensation"/>
    <property type="match status" value="1"/>
</dbReference>
<dbReference type="Pfam" id="PF07993">
    <property type="entry name" value="NAD_binding_4"/>
    <property type="match status" value="1"/>
</dbReference>
<dbReference type="Pfam" id="PF00550">
    <property type="entry name" value="PP-binding"/>
    <property type="match status" value="1"/>
</dbReference>
<dbReference type="SMART" id="SM00823">
    <property type="entry name" value="PKS_PP"/>
    <property type="match status" value="1"/>
</dbReference>
<dbReference type="SUPFAM" id="SSF56801">
    <property type="entry name" value="Acetyl-CoA synthetase-like"/>
    <property type="match status" value="1"/>
</dbReference>
<dbReference type="SUPFAM" id="SSF47336">
    <property type="entry name" value="ACP-like"/>
    <property type="match status" value="1"/>
</dbReference>
<dbReference type="SUPFAM" id="SSF52777">
    <property type="entry name" value="CoA-dependent acyltransferases"/>
    <property type="match status" value="2"/>
</dbReference>
<dbReference type="SUPFAM" id="SSF51735">
    <property type="entry name" value="NAD(P)-binding Rossmann-fold domains"/>
    <property type="match status" value="1"/>
</dbReference>
<dbReference type="PROSITE" id="PS00455">
    <property type="entry name" value="AMP_BINDING"/>
    <property type="match status" value="1"/>
</dbReference>
<dbReference type="PROSITE" id="PS50075">
    <property type="entry name" value="CARRIER"/>
    <property type="match status" value="1"/>
</dbReference>
<keyword id="KW-0067">ATP-binding</keyword>
<keyword id="KW-0436">Ligase</keyword>
<keyword id="KW-0547">Nucleotide-binding</keyword>
<keyword id="KW-0596">Phosphopantetheine</keyword>
<keyword id="KW-0597">Phosphoprotein</keyword>
<keyword id="KW-0808">Transferase</keyword>
<proteinExistence type="evidence at protein level"/>
<evidence type="ECO:0000255" key="1">
    <source>
        <dbReference type="PROSITE-ProRule" id="PRU00258"/>
    </source>
</evidence>
<evidence type="ECO:0000256" key="2">
    <source>
        <dbReference type="SAM" id="MobiDB-lite"/>
    </source>
</evidence>
<evidence type="ECO:0000269" key="3">
    <source>
    </source>
</evidence>
<evidence type="ECO:0000269" key="4">
    <source>
    </source>
</evidence>
<evidence type="ECO:0000303" key="5">
    <source>
    </source>
</evidence>
<evidence type="ECO:0000305" key="6"/>
<evidence type="ECO:0000305" key="7">
    <source>
    </source>
</evidence>
<evidence type="ECO:0000305" key="8">
    <source>
    </source>
</evidence>
<feature type="chain" id="PRO_0000458123" description="Isonitrile lipopeptide synthase">
    <location>
        <begin position="1"/>
        <end position="1470"/>
    </location>
</feature>
<feature type="domain" description="Carrier" evidence="1">
    <location>
        <begin position="974"/>
        <end position="1049"/>
    </location>
</feature>
<feature type="region of interest" description="Disordered" evidence="2">
    <location>
        <begin position="584"/>
        <end position="603"/>
    </location>
</feature>
<feature type="region of interest" description="Disordered" evidence="2">
    <location>
        <begin position="1049"/>
        <end position="1070"/>
    </location>
</feature>
<feature type="compositionally biased region" description="Low complexity" evidence="2">
    <location>
        <begin position="1049"/>
        <end position="1059"/>
    </location>
</feature>
<feature type="modified residue" description="O-(pantetheine 4'-phosphoryl)serine" evidence="1">
    <location>
        <position position="1009"/>
    </location>
</feature>